<dbReference type="EC" id="6.1.1.7" evidence="1"/>
<dbReference type="EMBL" id="CP000568">
    <property type="protein sequence ID" value="ABN54395.1"/>
    <property type="molecule type" value="Genomic_DNA"/>
</dbReference>
<dbReference type="RefSeq" id="WP_020458053.1">
    <property type="nucleotide sequence ID" value="NC_009012.1"/>
</dbReference>
<dbReference type="SMR" id="A3DKB6"/>
<dbReference type="STRING" id="203119.Cthe_3200"/>
<dbReference type="GeneID" id="35802913"/>
<dbReference type="KEGG" id="cth:Cthe_3200"/>
<dbReference type="eggNOG" id="COG0013">
    <property type="taxonomic scope" value="Bacteria"/>
</dbReference>
<dbReference type="HOGENOM" id="CLU_004485_1_1_9"/>
<dbReference type="OrthoDB" id="9803884at2"/>
<dbReference type="Proteomes" id="UP000002145">
    <property type="component" value="Chromosome"/>
</dbReference>
<dbReference type="GO" id="GO:0005829">
    <property type="term" value="C:cytosol"/>
    <property type="evidence" value="ECO:0007669"/>
    <property type="project" value="TreeGrafter"/>
</dbReference>
<dbReference type="GO" id="GO:0004813">
    <property type="term" value="F:alanine-tRNA ligase activity"/>
    <property type="evidence" value="ECO:0007669"/>
    <property type="project" value="UniProtKB-UniRule"/>
</dbReference>
<dbReference type="GO" id="GO:0002161">
    <property type="term" value="F:aminoacyl-tRNA deacylase activity"/>
    <property type="evidence" value="ECO:0007669"/>
    <property type="project" value="TreeGrafter"/>
</dbReference>
<dbReference type="GO" id="GO:0005524">
    <property type="term" value="F:ATP binding"/>
    <property type="evidence" value="ECO:0007669"/>
    <property type="project" value="UniProtKB-UniRule"/>
</dbReference>
<dbReference type="GO" id="GO:0140096">
    <property type="term" value="F:catalytic activity, acting on a protein"/>
    <property type="evidence" value="ECO:0007669"/>
    <property type="project" value="UniProtKB-ARBA"/>
</dbReference>
<dbReference type="GO" id="GO:0016740">
    <property type="term" value="F:transferase activity"/>
    <property type="evidence" value="ECO:0007669"/>
    <property type="project" value="UniProtKB-ARBA"/>
</dbReference>
<dbReference type="GO" id="GO:0000049">
    <property type="term" value="F:tRNA binding"/>
    <property type="evidence" value="ECO:0007669"/>
    <property type="project" value="UniProtKB-KW"/>
</dbReference>
<dbReference type="GO" id="GO:0008270">
    <property type="term" value="F:zinc ion binding"/>
    <property type="evidence" value="ECO:0007669"/>
    <property type="project" value="UniProtKB-UniRule"/>
</dbReference>
<dbReference type="GO" id="GO:0006419">
    <property type="term" value="P:alanyl-tRNA aminoacylation"/>
    <property type="evidence" value="ECO:0007669"/>
    <property type="project" value="UniProtKB-UniRule"/>
</dbReference>
<dbReference type="CDD" id="cd00673">
    <property type="entry name" value="AlaRS_core"/>
    <property type="match status" value="1"/>
</dbReference>
<dbReference type="FunFam" id="2.40.30.130:FF:000001">
    <property type="entry name" value="Alanine--tRNA ligase"/>
    <property type="match status" value="1"/>
</dbReference>
<dbReference type="FunFam" id="3.10.310.40:FF:000001">
    <property type="entry name" value="Alanine--tRNA ligase"/>
    <property type="match status" value="1"/>
</dbReference>
<dbReference type="FunFam" id="3.30.54.20:FF:000001">
    <property type="entry name" value="Alanine--tRNA ligase"/>
    <property type="match status" value="1"/>
</dbReference>
<dbReference type="FunFam" id="3.30.930.10:FF:000004">
    <property type="entry name" value="Alanine--tRNA ligase"/>
    <property type="match status" value="1"/>
</dbReference>
<dbReference type="FunFam" id="3.30.980.10:FF:000004">
    <property type="entry name" value="Alanine--tRNA ligase, cytoplasmic"/>
    <property type="match status" value="1"/>
</dbReference>
<dbReference type="Gene3D" id="2.40.30.130">
    <property type="match status" value="1"/>
</dbReference>
<dbReference type="Gene3D" id="3.10.310.40">
    <property type="match status" value="1"/>
</dbReference>
<dbReference type="Gene3D" id="3.30.54.20">
    <property type="match status" value="1"/>
</dbReference>
<dbReference type="Gene3D" id="6.10.250.550">
    <property type="match status" value="1"/>
</dbReference>
<dbReference type="Gene3D" id="3.30.930.10">
    <property type="entry name" value="Bira Bifunctional Protein, Domain 2"/>
    <property type="match status" value="1"/>
</dbReference>
<dbReference type="Gene3D" id="3.30.980.10">
    <property type="entry name" value="Threonyl-trna Synthetase, Chain A, domain 2"/>
    <property type="match status" value="1"/>
</dbReference>
<dbReference type="HAMAP" id="MF_00036_B">
    <property type="entry name" value="Ala_tRNA_synth_B"/>
    <property type="match status" value="1"/>
</dbReference>
<dbReference type="InterPro" id="IPR045864">
    <property type="entry name" value="aa-tRNA-synth_II/BPL/LPL"/>
</dbReference>
<dbReference type="InterPro" id="IPR002318">
    <property type="entry name" value="Ala-tRNA-lgiase_IIc"/>
</dbReference>
<dbReference type="InterPro" id="IPR018162">
    <property type="entry name" value="Ala-tRNA-ligase_IIc_anticod-bd"/>
</dbReference>
<dbReference type="InterPro" id="IPR018165">
    <property type="entry name" value="Ala-tRNA-synth_IIc_core"/>
</dbReference>
<dbReference type="InterPro" id="IPR018164">
    <property type="entry name" value="Ala-tRNA-synth_IIc_N"/>
</dbReference>
<dbReference type="InterPro" id="IPR050058">
    <property type="entry name" value="Ala-tRNA_ligase"/>
</dbReference>
<dbReference type="InterPro" id="IPR023033">
    <property type="entry name" value="Ala_tRNA_ligase_euk/bac"/>
</dbReference>
<dbReference type="InterPro" id="IPR003156">
    <property type="entry name" value="DHHA1_dom"/>
</dbReference>
<dbReference type="InterPro" id="IPR018163">
    <property type="entry name" value="Thr/Ala-tRNA-synth_IIc_edit"/>
</dbReference>
<dbReference type="InterPro" id="IPR009000">
    <property type="entry name" value="Transl_B-barrel_sf"/>
</dbReference>
<dbReference type="InterPro" id="IPR012947">
    <property type="entry name" value="tRNA_SAD"/>
</dbReference>
<dbReference type="NCBIfam" id="TIGR00344">
    <property type="entry name" value="alaS"/>
    <property type="match status" value="1"/>
</dbReference>
<dbReference type="PANTHER" id="PTHR11777:SF9">
    <property type="entry name" value="ALANINE--TRNA LIGASE, CYTOPLASMIC"/>
    <property type="match status" value="1"/>
</dbReference>
<dbReference type="PANTHER" id="PTHR11777">
    <property type="entry name" value="ALANYL-TRNA SYNTHETASE"/>
    <property type="match status" value="1"/>
</dbReference>
<dbReference type="Pfam" id="PF02272">
    <property type="entry name" value="DHHA1"/>
    <property type="match status" value="1"/>
</dbReference>
<dbReference type="Pfam" id="PF01411">
    <property type="entry name" value="tRNA-synt_2c"/>
    <property type="match status" value="1"/>
</dbReference>
<dbReference type="Pfam" id="PF07973">
    <property type="entry name" value="tRNA_SAD"/>
    <property type="match status" value="1"/>
</dbReference>
<dbReference type="PRINTS" id="PR00980">
    <property type="entry name" value="TRNASYNTHALA"/>
</dbReference>
<dbReference type="SMART" id="SM00863">
    <property type="entry name" value="tRNA_SAD"/>
    <property type="match status" value="1"/>
</dbReference>
<dbReference type="SUPFAM" id="SSF55681">
    <property type="entry name" value="Class II aaRS and biotin synthetases"/>
    <property type="match status" value="1"/>
</dbReference>
<dbReference type="SUPFAM" id="SSF101353">
    <property type="entry name" value="Putative anticodon-binding domain of alanyl-tRNA synthetase (AlaRS)"/>
    <property type="match status" value="1"/>
</dbReference>
<dbReference type="SUPFAM" id="SSF55186">
    <property type="entry name" value="ThrRS/AlaRS common domain"/>
    <property type="match status" value="1"/>
</dbReference>
<dbReference type="SUPFAM" id="SSF50447">
    <property type="entry name" value="Translation proteins"/>
    <property type="match status" value="1"/>
</dbReference>
<dbReference type="PROSITE" id="PS50860">
    <property type="entry name" value="AA_TRNA_LIGASE_II_ALA"/>
    <property type="match status" value="1"/>
</dbReference>
<comment type="function">
    <text evidence="1">Catalyzes the attachment of alanine to tRNA(Ala) in a two-step reaction: alanine is first activated by ATP to form Ala-AMP and then transferred to the acceptor end of tRNA(Ala). Also edits incorrectly charged Ser-tRNA(Ala) and Gly-tRNA(Ala) via its editing domain.</text>
</comment>
<comment type="catalytic activity">
    <reaction evidence="1">
        <text>tRNA(Ala) + L-alanine + ATP = L-alanyl-tRNA(Ala) + AMP + diphosphate</text>
        <dbReference type="Rhea" id="RHEA:12540"/>
        <dbReference type="Rhea" id="RHEA-COMP:9657"/>
        <dbReference type="Rhea" id="RHEA-COMP:9923"/>
        <dbReference type="ChEBI" id="CHEBI:30616"/>
        <dbReference type="ChEBI" id="CHEBI:33019"/>
        <dbReference type="ChEBI" id="CHEBI:57972"/>
        <dbReference type="ChEBI" id="CHEBI:78442"/>
        <dbReference type="ChEBI" id="CHEBI:78497"/>
        <dbReference type="ChEBI" id="CHEBI:456215"/>
        <dbReference type="EC" id="6.1.1.7"/>
    </reaction>
</comment>
<comment type="cofactor">
    <cofactor evidence="1">
        <name>Zn(2+)</name>
        <dbReference type="ChEBI" id="CHEBI:29105"/>
    </cofactor>
    <text evidence="1">Binds 1 zinc ion per subunit.</text>
</comment>
<comment type="subcellular location">
    <subcellularLocation>
        <location evidence="1">Cytoplasm</location>
    </subcellularLocation>
</comment>
<comment type="domain">
    <text evidence="1">Consists of three domains; the N-terminal catalytic domain, the editing domain and the C-terminal C-Ala domain. The editing domain removes incorrectly charged amino acids, while the C-Ala domain, along with tRNA(Ala), serves as a bridge to cooperatively bring together the editing and aminoacylation centers thus stimulating deacylation of misacylated tRNAs.</text>
</comment>
<comment type="similarity">
    <text evidence="1">Belongs to the class-II aminoacyl-tRNA synthetase family.</text>
</comment>
<proteinExistence type="inferred from homology"/>
<name>SYA_ACET2</name>
<protein>
    <recommendedName>
        <fullName evidence="1">Alanine--tRNA ligase</fullName>
        <ecNumber evidence="1">6.1.1.7</ecNumber>
    </recommendedName>
    <alternativeName>
        <fullName evidence="1">Alanyl-tRNA synthetase</fullName>
        <shortName evidence="1">AlaRS</shortName>
    </alternativeName>
</protein>
<feature type="chain" id="PRO_0000347573" description="Alanine--tRNA ligase">
    <location>
        <begin position="1"/>
        <end position="880"/>
    </location>
</feature>
<feature type="binding site" evidence="1">
    <location>
        <position position="566"/>
    </location>
    <ligand>
        <name>Zn(2+)</name>
        <dbReference type="ChEBI" id="CHEBI:29105"/>
    </ligand>
</feature>
<feature type="binding site" evidence="1">
    <location>
        <position position="570"/>
    </location>
    <ligand>
        <name>Zn(2+)</name>
        <dbReference type="ChEBI" id="CHEBI:29105"/>
    </ligand>
</feature>
<feature type="binding site" evidence="1">
    <location>
        <position position="668"/>
    </location>
    <ligand>
        <name>Zn(2+)</name>
        <dbReference type="ChEBI" id="CHEBI:29105"/>
    </ligand>
</feature>
<feature type="binding site" evidence="1">
    <location>
        <position position="672"/>
    </location>
    <ligand>
        <name>Zn(2+)</name>
        <dbReference type="ChEBI" id="CHEBI:29105"/>
    </ligand>
</feature>
<sequence length="880" mass="98047">MEKLGLNELRERFLKFFESKGHLRLPSFSLIPQNDPSLLLINSGMAPLKPYFTGQEEPPRRRVTTCQKCIRTPDIENVGKTARHGTFFEMLGNFSFGDYFKNEAIPWAWEFFTEDLKIPVERLWVSIYEDDDEAFEIWNKKVGLPPERIVRMGKDNNFWEHGTGPCGPCSEIYFDRGEDKGCGKPDCKVGCDCDRFIEVWNLVFTQFNKEEDGSYSRLKNPNIDTGMGLERLACVMQDVNNLFEVDTIRRVLDYICKITGVEYGSSEKTDVSIRVITDHIRSTTMMISDGVIPSNEGRGYVLRRLLRRAARHGKLLGMDRPFLSDVASVVIKESKGAYPELAERAENIKKVIRIEEEKFEETIDQGLVILSKYIEETRKKGEKVISGDVVFELHGTYGFPVDLTREIAEENGLGVDEEGFREKMKEHQNLAREDYQSKQGSAWGDDIYSKLDKSVKTEFLGYTESEATARVLYIIKEDQVVDEAQKGDSVTVILDRTPFYAESGGQVGDKGLIEAEGARVKVLDCKKTNDGKYLHIGEIEEGTLRNGMEVKATIDKKRRMAIARNHTTTHLLHKALRNVLGSHVNQAGSLVEPDRLRFDFTHFSAMTPEEIKSVEDQVNEKILESIAVDIREMSIDEARKMGATALFGEKYGDVVRVVKIGDYSIELCGGTHLNVTSQAGFIKIVSESGVASGVRRIEALTGEAALKHFDEEEKLLRDIAQVLKTNPSDSVKRIESLLNEIKAAQKEIEQLRSKLVSSSLDDVLAKAVEINGVKVVTARFDQFDMEALRNTGDTIRNKLGSGVVVLGTGFGGKVSLVVMATKDVVAKGIHAGNIIKEAAKVAGGGGGGRPDMAQAGGKDVSKIDEALKQAVKVIESQLAG</sequence>
<gene>
    <name evidence="1" type="primary">alaS</name>
    <name type="ordered locus">Cthe_3200</name>
</gene>
<accession>A3DKB6</accession>
<evidence type="ECO:0000255" key="1">
    <source>
        <dbReference type="HAMAP-Rule" id="MF_00036"/>
    </source>
</evidence>
<reference key="1">
    <citation type="submission" date="2007-02" db="EMBL/GenBank/DDBJ databases">
        <title>Complete sequence of Clostridium thermocellum ATCC 27405.</title>
        <authorList>
            <consortium name="US DOE Joint Genome Institute"/>
            <person name="Copeland A."/>
            <person name="Lucas S."/>
            <person name="Lapidus A."/>
            <person name="Barry K."/>
            <person name="Detter J.C."/>
            <person name="Glavina del Rio T."/>
            <person name="Hammon N."/>
            <person name="Israni S."/>
            <person name="Dalin E."/>
            <person name="Tice H."/>
            <person name="Pitluck S."/>
            <person name="Chertkov O."/>
            <person name="Brettin T."/>
            <person name="Bruce D."/>
            <person name="Han C."/>
            <person name="Tapia R."/>
            <person name="Gilna P."/>
            <person name="Schmutz J."/>
            <person name="Larimer F."/>
            <person name="Land M."/>
            <person name="Hauser L."/>
            <person name="Kyrpides N."/>
            <person name="Mikhailova N."/>
            <person name="Wu J.H.D."/>
            <person name="Newcomb M."/>
            <person name="Richardson P."/>
        </authorList>
    </citation>
    <scope>NUCLEOTIDE SEQUENCE [LARGE SCALE GENOMIC DNA]</scope>
    <source>
        <strain>ATCC 27405 / DSM 1237 / JCM 9322 / NBRC 103400 / NCIMB 10682 / NRRL B-4536 / VPI 7372</strain>
    </source>
</reference>
<keyword id="KW-0030">Aminoacyl-tRNA synthetase</keyword>
<keyword id="KW-0067">ATP-binding</keyword>
<keyword id="KW-0963">Cytoplasm</keyword>
<keyword id="KW-0436">Ligase</keyword>
<keyword id="KW-0479">Metal-binding</keyword>
<keyword id="KW-0547">Nucleotide-binding</keyword>
<keyword id="KW-0648">Protein biosynthesis</keyword>
<keyword id="KW-1185">Reference proteome</keyword>
<keyword id="KW-0694">RNA-binding</keyword>
<keyword id="KW-0820">tRNA-binding</keyword>
<keyword id="KW-0862">Zinc</keyword>
<organism>
    <name type="scientific">Acetivibrio thermocellus (strain ATCC 27405 / DSM 1237 / JCM 9322 / NBRC 103400 / NCIMB 10682 / NRRL B-4536 / VPI 7372)</name>
    <name type="common">Clostridium thermocellum</name>
    <dbReference type="NCBI Taxonomy" id="203119"/>
    <lineage>
        <taxon>Bacteria</taxon>
        <taxon>Bacillati</taxon>
        <taxon>Bacillota</taxon>
        <taxon>Clostridia</taxon>
        <taxon>Eubacteriales</taxon>
        <taxon>Oscillospiraceae</taxon>
        <taxon>Acetivibrio</taxon>
    </lineage>
</organism>